<protein>
    <recommendedName>
        <fullName evidence="1">Ribosome-recycling factor</fullName>
        <shortName evidence="1">RRF</shortName>
    </recommendedName>
    <alternativeName>
        <fullName evidence="1">Ribosome-releasing factor</fullName>
    </alternativeName>
</protein>
<proteinExistence type="inferred from homology"/>
<name>RRF_PROM1</name>
<reference key="1">
    <citation type="journal article" date="2007" name="PLoS Genet.">
        <title>Patterns and implications of gene gain and loss in the evolution of Prochlorococcus.</title>
        <authorList>
            <person name="Kettler G.C."/>
            <person name="Martiny A.C."/>
            <person name="Huang K."/>
            <person name="Zucker J."/>
            <person name="Coleman M.L."/>
            <person name="Rodrigue S."/>
            <person name="Chen F."/>
            <person name="Lapidus A."/>
            <person name="Ferriera S."/>
            <person name="Johnson J."/>
            <person name="Steglich C."/>
            <person name="Church G.M."/>
            <person name="Richardson P."/>
            <person name="Chisholm S.W."/>
        </authorList>
    </citation>
    <scope>NUCLEOTIDE SEQUENCE [LARGE SCALE GENOMIC DNA]</scope>
    <source>
        <strain>NATL1A</strain>
    </source>
</reference>
<organism>
    <name type="scientific">Prochlorococcus marinus (strain NATL1A)</name>
    <dbReference type="NCBI Taxonomy" id="167555"/>
    <lineage>
        <taxon>Bacteria</taxon>
        <taxon>Bacillati</taxon>
        <taxon>Cyanobacteriota</taxon>
        <taxon>Cyanophyceae</taxon>
        <taxon>Synechococcales</taxon>
        <taxon>Prochlorococcaceae</taxon>
        <taxon>Prochlorococcus</taxon>
    </lineage>
</organism>
<dbReference type="EMBL" id="CP000553">
    <property type="protein sequence ID" value="ABM75140.1"/>
    <property type="molecule type" value="Genomic_DNA"/>
</dbReference>
<dbReference type="RefSeq" id="WP_011823315.1">
    <property type="nucleotide sequence ID" value="NC_008819.1"/>
</dbReference>
<dbReference type="SMR" id="A2C0Y0"/>
<dbReference type="KEGG" id="pme:NATL1_05781"/>
<dbReference type="eggNOG" id="COG0233">
    <property type="taxonomic scope" value="Bacteria"/>
</dbReference>
<dbReference type="HOGENOM" id="CLU_073981_2_0_3"/>
<dbReference type="Proteomes" id="UP000002592">
    <property type="component" value="Chromosome"/>
</dbReference>
<dbReference type="GO" id="GO:0005737">
    <property type="term" value="C:cytoplasm"/>
    <property type="evidence" value="ECO:0007669"/>
    <property type="project" value="UniProtKB-SubCell"/>
</dbReference>
<dbReference type="GO" id="GO:0043023">
    <property type="term" value="F:ribosomal large subunit binding"/>
    <property type="evidence" value="ECO:0007669"/>
    <property type="project" value="TreeGrafter"/>
</dbReference>
<dbReference type="GO" id="GO:0006415">
    <property type="term" value="P:translational termination"/>
    <property type="evidence" value="ECO:0007669"/>
    <property type="project" value="UniProtKB-UniRule"/>
</dbReference>
<dbReference type="CDD" id="cd00520">
    <property type="entry name" value="RRF"/>
    <property type="match status" value="1"/>
</dbReference>
<dbReference type="FunFam" id="1.10.132.20:FF:000001">
    <property type="entry name" value="Ribosome-recycling factor"/>
    <property type="match status" value="1"/>
</dbReference>
<dbReference type="FunFam" id="3.30.1360.40:FF:000001">
    <property type="entry name" value="Ribosome-recycling factor"/>
    <property type="match status" value="1"/>
</dbReference>
<dbReference type="Gene3D" id="3.30.1360.40">
    <property type="match status" value="1"/>
</dbReference>
<dbReference type="Gene3D" id="1.10.132.20">
    <property type="entry name" value="Ribosome-recycling factor"/>
    <property type="match status" value="1"/>
</dbReference>
<dbReference type="HAMAP" id="MF_00040">
    <property type="entry name" value="RRF"/>
    <property type="match status" value="1"/>
</dbReference>
<dbReference type="InterPro" id="IPR002661">
    <property type="entry name" value="Ribosome_recyc_fac"/>
</dbReference>
<dbReference type="InterPro" id="IPR023584">
    <property type="entry name" value="Ribosome_recyc_fac_dom"/>
</dbReference>
<dbReference type="InterPro" id="IPR036191">
    <property type="entry name" value="RRF_sf"/>
</dbReference>
<dbReference type="NCBIfam" id="TIGR00496">
    <property type="entry name" value="frr"/>
    <property type="match status" value="1"/>
</dbReference>
<dbReference type="PANTHER" id="PTHR20982:SF3">
    <property type="entry name" value="MITOCHONDRIAL RIBOSOME RECYCLING FACTOR PSEUDO 1"/>
    <property type="match status" value="1"/>
</dbReference>
<dbReference type="PANTHER" id="PTHR20982">
    <property type="entry name" value="RIBOSOME RECYCLING FACTOR"/>
    <property type="match status" value="1"/>
</dbReference>
<dbReference type="Pfam" id="PF01765">
    <property type="entry name" value="RRF"/>
    <property type="match status" value="1"/>
</dbReference>
<dbReference type="SUPFAM" id="SSF55194">
    <property type="entry name" value="Ribosome recycling factor, RRF"/>
    <property type="match status" value="1"/>
</dbReference>
<comment type="function">
    <text evidence="1">Responsible for the release of ribosomes from messenger RNA at the termination of protein biosynthesis. May increase the efficiency of translation by recycling ribosomes from one round of translation to another.</text>
</comment>
<comment type="subcellular location">
    <subcellularLocation>
        <location evidence="1">Cytoplasm</location>
    </subcellularLocation>
</comment>
<comment type="similarity">
    <text evidence="1">Belongs to the RRF family.</text>
</comment>
<evidence type="ECO:0000255" key="1">
    <source>
        <dbReference type="HAMAP-Rule" id="MF_00040"/>
    </source>
</evidence>
<evidence type="ECO:0000256" key="2">
    <source>
        <dbReference type="SAM" id="MobiDB-lite"/>
    </source>
</evidence>
<accession>A2C0Y0</accession>
<gene>
    <name evidence="1" type="primary">frr</name>
    <name type="ordered locus">NATL1_05781</name>
</gene>
<sequence>MSNQELKNTMSKSVEAAQRNFNTIRTGRANTSLLDRISVEYYGAETPLKSLATITTPDSQTIAIQPFDLGSLASIEKAIATSDLGFTPNNDGKIIRINVPPLTEERRKEFCKLASKYAEEGKVALRNIRREAIDRVKKSEKDGDLSEDQSRDEQEKIQKETDNFIKDIEKKLSEKEAEILKV</sequence>
<keyword id="KW-0963">Cytoplasm</keyword>
<keyword id="KW-0648">Protein biosynthesis</keyword>
<feature type="chain" id="PRO_1000003223" description="Ribosome-recycling factor">
    <location>
        <begin position="1"/>
        <end position="182"/>
    </location>
</feature>
<feature type="region of interest" description="Disordered" evidence="2">
    <location>
        <begin position="136"/>
        <end position="160"/>
    </location>
</feature>